<proteinExistence type="inferred from homology"/>
<accession>Q8TZ52</accession>
<sequence>MYVGRFLLAGKLEDGTPIAVYGVCSRSFSDRRIEVREGAAFVVPEDPSYITENPYVTYTCARIVDEFLVLTNGAQTDPIADKLESGVPPREALVSVTFAMDYEHDEYNTPRISLITDGETFWLGRVAPEEVYFRVMKPKDGEGYLLSVYGEYAEVPSKPNMTLDREDPLECDPVPSFEHYVCSVIARHDGGRWSLEAR</sequence>
<protein>
    <recommendedName>
        <fullName evidence="1">IMP cyclohydrolase</fullName>
        <ecNumber evidence="1">3.5.4.10</ecNumber>
    </recommendedName>
    <alternativeName>
        <fullName evidence="1">IMP synthase</fullName>
    </alternativeName>
    <alternativeName>
        <fullName evidence="1">Inosinicase</fullName>
    </alternativeName>
</protein>
<gene>
    <name evidence="1" type="primary">purO</name>
    <name type="ordered locus">MK0087</name>
</gene>
<comment type="function">
    <text evidence="1">Catalyzes the cyclization of 5-formylamidoimidazole-4-carboxamide ribonucleotide to IMP.</text>
</comment>
<comment type="catalytic activity">
    <reaction evidence="1">
        <text>IMP + H2O = 5-formamido-1-(5-phospho-D-ribosyl)imidazole-4-carboxamide</text>
        <dbReference type="Rhea" id="RHEA:18445"/>
        <dbReference type="ChEBI" id="CHEBI:15377"/>
        <dbReference type="ChEBI" id="CHEBI:58053"/>
        <dbReference type="ChEBI" id="CHEBI:58467"/>
        <dbReference type="EC" id="3.5.4.10"/>
    </reaction>
</comment>
<comment type="pathway">
    <text evidence="1">Purine metabolism; IMP biosynthesis via de novo pathway; IMP from 5-formamido-1-(5-phospho-D-ribosyl)imidazole-4-carboxamide: step 1/1.</text>
</comment>
<comment type="similarity">
    <text evidence="1">Belongs to the archaeal IMP cyclohydrolase family.</text>
</comment>
<reference key="1">
    <citation type="journal article" date="2002" name="Proc. Natl. Acad. Sci. U.S.A.">
        <title>The complete genome of hyperthermophile Methanopyrus kandleri AV19 and monophyly of archaeal methanogens.</title>
        <authorList>
            <person name="Slesarev A.I."/>
            <person name="Mezhevaya K.V."/>
            <person name="Makarova K.S."/>
            <person name="Polushin N.N."/>
            <person name="Shcherbinina O.V."/>
            <person name="Shakhova V.V."/>
            <person name="Belova G.I."/>
            <person name="Aravind L."/>
            <person name="Natale D.A."/>
            <person name="Rogozin I.B."/>
            <person name="Tatusov R.L."/>
            <person name="Wolf Y.I."/>
            <person name="Stetter K.O."/>
            <person name="Malykh A.G."/>
            <person name="Koonin E.V."/>
            <person name="Kozyavkin S.A."/>
        </authorList>
    </citation>
    <scope>NUCLEOTIDE SEQUENCE [LARGE SCALE GENOMIC DNA]</scope>
    <source>
        <strain>AV19 / DSM 6324 / JCM 9639 / NBRC 100938</strain>
    </source>
</reference>
<name>PURO_METKA</name>
<keyword id="KW-0378">Hydrolase</keyword>
<keyword id="KW-0658">Purine biosynthesis</keyword>
<keyword id="KW-1185">Reference proteome</keyword>
<organism>
    <name type="scientific">Methanopyrus kandleri (strain AV19 / DSM 6324 / JCM 9639 / NBRC 100938)</name>
    <dbReference type="NCBI Taxonomy" id="190192"/>
    <lineage>
        <taxon>Archaea</taxon>
        <taxon>Methanobacteriati</taxon>
        <taxon>Methanobacteriota</taxon>
        <taxon>Methanomada group</taxon>
        <taxon>Methanopyri</taxon>
        <taxon>Methanopyrales</taxon>
        <taxon>Methanopyraceae</taxon>
        <taxon>Methanopyrus</taxon>
    </lineage>
</organism>
<feature type="chain" id="PRO_0000145796" description="IMP cyclohydrolase">
    <location>
        <begin position="1"/>
        <end position="198"/>
    </location>
</feature>
<evidence type="ECO:0000255" key="1">
    <source>
        <dbReference type="HAMAP-Rule" id="MF_00705"/>
    </source>
</evidence>
<dbReference type="EC" id="3.5.4.10" evidence="1"/>
<dbReference type="EMBL" id="AE009439">
    <property type="protein sequence ID" value="AAM01304.1"/>
    <property type="molecule type" value="Genomic_DNA"/>
</dbReference>
<dbReference type="RefSeq" id="WP_011018459.1">
    <property type="nucleotide sequence ID" value="NC_003551.1"/>
</dbReference>
<dbReference type="SMR" id="Q8TZ52"/>
<dbReference type="STRING" id="190192.MK0087"/>
<dbReference type="PaxDb" id="190192-MK0087"/>
<dbReference type="EnsemblBacteria" id="AAM01304">
    <property type="protein sequence ID" value="AAM01304"/>
    <property type="gene ID" value="MK0087"/>
</dbReference>
<dbReference type="GeneID" id="1477390"/>
<dbReference type="KEGG" id="mka:MK0087"/>
<dbReference type="HOGENOM" id="CLU_1352116_0_0_2"/>
<dbReference type="InParanoid" id="Q8TZ52"/>
<dbReference type="OrthoDB" id="92928at2157"/>
<dbReference type="UniPathway" id="UPA00074">
    <property type="reaction ID" value="UER00135"/>
</dbReference>
<dbReference type="Proteomes" id="UP000001826">
    <property type="component" value="Chromosome"/>
</dbReference>
<dbReference type="GO" id="GO:0003937">
    <property type="term" value="F:IMP cyclohydrolase activity"/>
    <property type="evidence" value="ECO:0007669"/>
    <property type="project" value="UniProtKB-UniRule"/>
</dbReference>
<dbReference type="GO" id="GO:0006189">
    <property type="term" value="P:'de novo' IMP biosynthetic process"/>
    <property type="evidence" value="ECO:0007669"/>
    <property type="project" value="UniProtKB-UniRule"/>
</dbReference>
<dbReference type="Gene3D" id="3.60.20.20">
    <property type="entry name" value="Inosine monophosphate cyclohydrolase-like"/>
    <property type="match status" value="1"/>
</dbReference>
<dbReference type="HAMAP" id="MF_00705">
    <property type="entry name" value="IMP_cyclohydrol"/>
    <property type="match status" value="1"/>
</dbReference>
<dbReference type="InterPro" id="IPR010191">
    <property type="entry name" value="IMP_cyclohydrolase"/>
</dbReference>
<dbReference type="InterPro" id="IPR020600">
    <property type="entry name" value="IMP_cyclohydrolase-like"/>
</dbReference>
<dbReference type="InterPro" id="IPR036795">
    <property type="entry name" value="IMP_cyclohydrolase-like_sf"/>
</dbReference>
<dbReference type="NCBIfam" id="NF003167">
    <property type="entry name" value="PRK04151.1"/>
    <property type="match status" value="1"/>
</dbReference>
<dbReference type="NCBIfam" id="TIGR01922">
    <property type="entry name" value="purO_arch"/>
    <property type="match status" value="1"/>
</dbReference>
<dbReference type="Pfam" id="PF07826">
    <property type="entry name" value="IMP_cyclohyd"/>
    <property type="match status" value="1"/>
</dbReference>
<dbReference type="PIRSF" id="PIRSF004866">
    <property type="entry name" value="IMP_cclhdr_arch"/>
    <property type="match status" value="1"/>
</dbReference>
<dbReference type="SUPFAM" id="SSF75569">
    <property type="entry name" value="Archaeal IMP cyclohydrolase PurO"/>
    <property type="match status" value="1"/>
</dbReference>